<organism>
    <name type="scientific">Haemophilus influenzae (strain PittEE)</name>
    <dbReference type="NCBI Taxonomy" id="374930"/>
    <lineage>
        <taxon>Bacteria</taxon>
        <taxon>Pseudomonadati</taxon>
        <taxon>Pseudomonadota</taxon>
        <taxon>Gammaproteobacteria</taxon>
        <taxon>Pasteurellales</taxon>
        <taxon>Pasteurellaceae</taxon>
        <taxon>Haemophilus</taxon>
    </lineage>
</organism>
<gene>
    <name type="ordered locus">CGSHiEE_04300</name>
</gene>
<accession>A5UBW4</accession>
<feature type="chain" id="PRO_1000044796" description="UPF0260 protein CGSHiEE_04300">
    <location>
        <begin position="1"/>
        <end position="150"/>
    </location>
</feature>
<evidence type="ECO:0000255" key="1">
    <source>
        <dbReference type="HAMAP-Rule" id="MF_00676"/>
    </source>
</evidence>
<sequence length="150" mass="17702">MQLEPNFWQTKSLLEMTESEWEALCDGCGKCCYRKYIQGRGKRQKLYYTRIACNLLDLETGKCGNYSERFNIETDCTKLTKKNLPDFHWLPDTCAYRLLYEGKTLPEWHPLISGSPHSVKNADILIKNGIHERDVIDWFEFIIDEDHTFK</sequence>
<protein>
    <recommendedName>
        <fullName evidence="1">UPF0260 protein CGSHiEE_04300</fullName>
    </recommendedName>
</protein>
<reference key="1">
    <citation type="journal article" date="2007" name="Genome Biol.">
        <title>Characterization and modeling of the Haemophilus influenzae core and supragenomes based on the complete genomic sequences of Rd and 12 clinical nontypeable strains.</title>
        <authorList>
            <person name="Hogg J.S."/>
            <person name="Hu F.Z."/>
            <person name="Janto B."/>
            <person name="Boissy R."/>
            <person name="Hayes J."/>
            <person name="Keefe R."/>
            <person name="Post J.C."/>
            <person name="Ehrlich G.D."/>
        </authorList>
    </citation>
    <scope>NUCLEOTIDE SEQUENCE [LARGE SCALE GENOMIC DNA]</scope>
    <source>
        <strain>PittEE</strain>
    </source>
</reference>
<proteinExistence type="inferred from homology"/>
<dbReference type="EMBL" id="CP000671">
    <property type="protein sequence ID" value="ABQ98265.1"/>
    <property type="molecule type" value="Genomic_DNA"/>
</dbReference>
<dbReference type="KEGG" id="hip:CGSHiEE_04300"/>
<dbReference type="HOGENOM" id="CLU_109769_2_0_6"/>
<dbReference type="HAMAP" id="MF_00676">
    <property type="entry name" value="UPF0260"/>
    <property type="match status" value="1"/>
</dbReference>
<dbReference type="InterPro" id="IPR005358">
    <property type="entry name" value="Puta_zinc/iron-chelating_dom"/>
</dbReference>
<dbReference type="InterPro" id="IPR008228">
    <property type="entry name" value="UCP006173"/>
</dbReference>
<dbReference type="NCBIfam" id="NF003499">
    <property type="entry name" value="PRK05170.1-2"/>
    <property type="match status" value="1"/>
</dbReference>
<dbReference type="PANTHER" id="PTHR37421">
    <property type="entry name" value="UPF0260 PROTEIN YCGN"/>
    <property type="match status" value="1"/>
</dbReference>
<dbReference type="PANTHER" id="PTHR37421:SF1">
    <property type="entry name" value="UPF0260 PROTEIN YCGN"/>
    <property type="match status" value="1"/>
</dbReference>
<dbReference type="Pfam" id="PF03692">
    <property type="entry name" value="CxxCxxCC"/>
    <property type="match status" value="1"/>
</dbReference>
<dbReference type="PIRSF" id="PIRSF006173">
    <property type="entry name" value="UCP006173"/>
    <property type="match status" value="1"/>
</dbReference>
<comment type="similarity">
    <text evidence="1">Belongs to the UPF0260 family.</text>
</comment>
<name>Y4300_HAEIE</name>